<evidence type="ECO:0000255" key="1">
    <source>
        <dbReference type="HAMAP-Rule" id="MF_00688"/>
    </source>
</evidence>
<reference key="1">
    <citation type="submission" date="2007-08" db="EMBL/GenBank/DDBJ databases">
        <authorList>
            <consortium name="The Vibrio harveyi Genome Sequencing Project"/>
            <person name="Bassler B."/>
            <person name="Clifton S.W."/>
            <person name="Fulton L."/>
            <person name="Delehaunty K."/>
            <person name="Fronick C."/>
            <person name="Harrison M."/>
            <person name="Markivic C."/>
            <person name="Fulton R."/>
            <person name="Tin-Wollam A.-M."/>
            <person name="Shah N."/>
            <person name="Pepin K."/>
            <person name="Nash W."/>
            <person name="Thiruvilangam P."/>
            <person name="Bhonagiri V."/>
            <person name="Waters C."/>
            <person name="Tu K.C."/>
            <person name="Irgon J."/>
            <person name="Wilson R.K."/>
        </authorList>
    </citation>
    <scope>NUCLEOTIDE SEQUENCE [LARGE SCALE GENOMIC DNA]</scope>
    <source>
        <strain>ATCC BAA-1116 / BB120</strain>
    </source>
</reference>
<accession>A7N1L9</accession>
<keyword id="KW-0012">Acyltransferase</keyword>
<keyword id="KW-0963">Cytoplasm</keyword>
<keyword id="KW-0808">Transferase</keyword>
<proteinExistence type="inferred from homology"/>
<gene>
    <name evidence="1" type="primary">aat</name>
    <name type="ordered locus">VIBHAR_01570</name>
</gene>
<dbReference type="EC" id="2.3.2.6" evidence="1"/>
<dbReference type="EMBL" id="CP000789">
    <property type="protein sequence ID" value="ABU70540.1"/>
    <property type="molecule type" value="Genomic_DNA"/>
</dbReference>
<dbReference type="RefSeq" id="WP_012127426.1">
    <property type="nucleotide sequence ID" value="NC_022269.1"/>
</dbReference>
<dbReference type="SMR" id="A7N1L9"/>
<dbReference type="KEGG" id="vha:VIBHAR_01570"/>
<dbReference type="PATRIC" id="fig|338187.25.peg.1093"/>
<dbReference type="Proteomes" id="UP000008152">
    <property type="component" value="Chromosome I"/>
</dbReference>
<dbReference type="GO" id="GO:0005737">
    <property type="term" value="C:cytoplasm"/>
    <property type="evidence" value="ECO:0007669"/>
    <property type="project" value="UniProtKB-SubCell"/>
</dbReference>
<dbReference type="GO" id="GO:0008914">
    <property type="term" value="F:leucyl-tRNA--protein transferase activity"/>
    <property type="evidence" value="ECO:0007669"/>
    <property type="project" value="UniProtKB-UniRule"/>
</dbReference>
<dbReference type="GO" id="GO:0030163">
    <property type="term" value="P:protein catabolic process"/>
    <property type="evidence" value="ECO:0007669"/>
    <property type="project" value="UniProtKB-UniRule"/>
</dbReference>
<dbReference type="FunFam" id="3.30.70.3550:FF:000001">
    <property type="entry name" value="Leucyl/phenylalanyl-tRNA--protein transferase"/>
    <property type="match status" value="1"/>
</dbReference>
<dbReference type="FunFam" id="3.40.630.70:FF:000001">
    <property type="entry name" value="Leucyl/phenylalanyl-tRNA--protein transferase"/>
    <property type="match status" value="1"/>
</dbReference>
<dbReference type="Gene3D" id="3.40.630.70">
    <property type="entry name" value="Leucyl/phenylalanyl-tRNA-protein transferase, C-terminal domain"/>
    <property type="match status" value="1"/>
</dbReference>
<dbReference type="Gene3D" id="3.30.70.3550">
    <property type="entry name" value="Leucyl/phenylalanyl-tRNA-protein transferase, N-terminal domain"/>
    <property type="match status" value="1"/>
</dbReference>
<dbReference type="HAMAP" id="MF_00688">
    <property type="entry name" value="Leu_Phe_trans"/>
    <property type="match status" value="1"/>
</dbReference>
<dbReference type="InterPro" id="IPR016181">
    <property type="entry name" value="Acyl_CoA_acyltransferase"/>
</dbReference>
<dbReference type="InterPro" id="IPR004616">
    <property type="entry name" value="Leu/Phe-tRNA_Trfase"/>
</dbReference>
<dbReference type="InterPro" id="IPR042203">
    <property type="entry name" value="Leu/Phe-tRNA_Trfase_C"/>
</dbReference>
<dbReference type="InterPro" id="IPR042221">
    <property type="entry name" value="Leu/Phe-tRNA_Trfase_N"/>
</dbReference>
<dbReference type="NCBIfam" id="TIGR00667">
    <property type="entry name" value="aat"/>
    <property type="match status" value="1"/>
</dbReference>
<dbReference type="PANTHER" id="PTHR30098">
    <property type="entry name" value="LEUCYL/PHENYLALANYL-TRNA--PROTEIN TRANSFERASE"/>
    <property type="match status" value="1"/>
</dbReference>
<dbReference type="PANTHER" id="PTHR30098:SF2">
    <property type="entry name" value="LEUCYL_PHENYLALANYL-TRNA--PROTEIN TRANSFERASE"/>
    <property type="match status" value="1"/>
</dbReference>
<dbReference type="Pfam" id="PF03588">
    <property type="entry name" value="Leu_Phe_trans"/>
    <property type="match status" value="1"/>
</dbReference>
<dbReference type="SUPFAM" id="SSF55729">
    <property type="entry name" value="Acyl-CoA N-acyltransferases (Nat)"/>
    <property type="match status" value="1"/>
</dbReference>
<feature type="chain" id="PRO_1000045118" description="Leucyl/phenylalanyl-tRNA--protein transferase">
    <location>
        <begin position="1"/>
        <end position="236"/>
    </location>
</feature>
<protein>
    <recommendedName>
        <fullName evidence="1">Leucyl/phenylalanyl-tRNA--protein transferase</fullName>
        <ecNumber evidence="1">2.3.2.6</ecNumber>
    </recommendedName>
    <alternativeName>
        <fullName evidence="1">L/F-transferase</fullName>
    </alternativeName>
    <alternativeName>
        <fullName evidence="1">Leucyltransferase</fullName>
    </alternativeName>
    <alternativeName>
        <fullName evidence="1">Phenyalanyltransferase</fullName>
    </alternativeName>
</protein>
<sequence>MAIYLTELGDSHSFPSPYDALNDPNGLLAFGGDLNPDRILNGYHQGIFPWYGPGEPILWWSPSPRAVFDPLAFKPSKSLKKFQRKQQYKVTLNNATERVIQLCSSTRSAEETWLNEEMQTSYIELARRGHCHSVEVWHDEKLIGGLYGISVGQLFCGESMFSLKDNASKIALWYLCEHLASNQGQLIDCQVMNPHLASLGAFELERDDFVQKLLSLRDRNINLGTFEPQVLQGAVS</sequence>
<organism>
    <name type="scientific">Vibrio campbellii (strain ATCC BAA-1116)</name>
    <dbReference type="NCBI Taxonomy" id="2902295"/>
    <lineage>
        <taxon>Bacteria</taxon>
        <taxon>Pseudomonadati</taxon>
        <taxon>Pseudomonadota</taxon>
        <taxon>Gammaproteobacteria</taxon>
        <taxon>Vibrionales</taxon>
        <taxon>Vibrionaceae</taxon>
        <taxon>Vibrio</taxon>
    </lineage>
</organism>
<comment type="function">
    <text evidence="1">Functions in the N-end rule pathway of protein degradation where it conjugates Leu, Phe and, less efficiently, Met from aminoacyl-tRNAs to the N-termini of proteins containing an N-terminal arginine or lysine.</text>
</comment>
<comment type="catalytic activity">
    <reaction evidence="1">
        <text>N-terminal L-lysyl-[protein] + L-leucyl-tRNA(Leu) = N-terminal L-leucyl-L-lysyl-[protein] + tRNA(Leu) + H(+)</text>
        <dbReference type="Rhea" id="RHEA:12340"/>
        <dbReference type="Rhea" id="RHEA-COMP:9613"/>
        <dbReference type="Rhea" id="RHEA-COMP:9622"/>
        <dbReference type="Rhea" id="RHEA-COMP:12670"/>
        <dbReference type="Rhea" id="RHEA-COMP:12671"/>
        <dbReference type="ChEBI" id="CHEBI:15378"/>
        <dbReference type="ChEBI" id="CHEBI:65249"/>
        <dbReference type="ChEBI" id="CHEBI:78442"/>
        <dbReference type="ChEBI" id="CHEBI:78494"/>
        <dbReference type="ChEBI" id="CHEBI:133043"/>
        <dbReference type="EC" id="2.3.2.6"/>
    </reaction>
</comment>
<comment type="catalytic activity">
    <reaction evidence="1">
        <text>N-terminal L-arginyl-[protein] + L-leucyl-tRNA(Leu) = N-terminal L-leucyl-L-arginyl-[protein] + tRNA(Leu) + H(+)</text>
        <dbReference type="Rhea" id="RHEA:50416"/>
        <dbReference type="Rhea" id="RHEA-COMP:9613"/>
        <dbReference type="Rhea" id="RHEA-COMP:9622"/>
        <dbReference type="Rhea" id="RHEA-COMP:12672"/>
        <dbReference type="Rhea" id="RHEA-COMP:12673"/>
        <dbReference type="ChEBI" id="CHEBI:15378"/>
        <dbReference type="ChEBI" id="CHEBI:64719"/>
        <dbReference type="ChEBI" id="CHEBI:78442"/>
        <dbReference type="ChEBI" id="CHEBI:78494"/>
        <dbReference type="ChEBI" id="CHEBI:133044"/>
        <dbReference type="EC" id="2.3.2.6"/>
    </reaction>
</comment>
<comment type="catalytic activity">
    <reaction evidence="1">
        <text>L-phenylalanyl-tRNA(Phe) + an N-terminal L-alpha-aminoacyl-[protein] = an N-terminal L-phenylalanyl-L-alpha-aminoacyl-[protein] + tRNA(Phe)</text>
        <dbReference type="Rhea" id="RHEA:43632"/>
        <dbReference type="Rhea" id="RHEA-COMP:9668"/>
        <dbReference type="Rhea" id="RHEA-COMP:9699"/>
        <dbReference type="Rhea" id="RHEA-COMP:10636"/>
        <dbReference type="Rhea" id="RHEA-COMP:10637"/>
        <dbReference type="ChEBI" id="CHEBI:78442"/>
        <dbReference type="ChEBI" id="CHEBI:78531"/>
        <dbReference type="ChEBI" id="CHEBI:78597"/>
        <dbReference type="ChEBI" id="CHEBI:83561"/>
        <dbReference type="EC" id="2.3.2.6"/>
    </reaction>
</comment>
<comment type="subcellular location">
    <subcellularLocation>
        <location evidence="1">Cytoplasm</location>
    </subcellularLocation>
</comment>
<comment type="similarity">
    <text evidence="1">Belongs to the L/F-transferase family.</text>
</comment>
<name>LFTR_VIBC1</name>